<evidence type="ECO:0000255" key="1">
    <source>
        <dbReference type="HAMAP-Rule" id="MF_00445"/>
    </source>
</evidence>
<dbReference type="EC" id="7.1.1.-" evidence="1"/>
<dbReference type="EMBL" id="LT708304">
    <property type="protein sequence ID" value="SIU01809.1"/>
    <property type="molecule type" value="Genomic_DNA"/>
</dbReference>
<dbReference type="RefSeq" id="NP_856827.1">
    <property type="nucleotide sequence ID" value="NC_002945.3"/>
</dbReference>
<dbReference type="RefSeq" id="WP_003900644.1">
    <property type="nucleotide sequence ID" value="NC_002945.4"/>
</dbReference>
<dbReference type="SMR" id="P0A5M1"/>
<dbReference type="GeneID" id="45427145"/>
<dbReference type="KEGG" id="mbo:BQ2027_MB3182"/>
<dbReference type="PATRIC" id="fig|233413.5.peg.3500"/>
<dbReference type="Proteomes" id="UP000001419">
    <property type="component" value="Chromosome"/>
</dbReference>
<dbReference type="GO" id="GO:0005886">
    <property type="term" value="C:plasma membrane"/>
    <property type="evidence" value="ECO:0007669"/>
    <property type="project" value="UniProtKB-SubCell"/>
</dbReference>
<dbReference type="GO" id="GO:0008137">
    <property type="term" value="F:NADH dehydrogenase (ubiquinone) activity"/>
    <property type="evidence" value="ECO:0007669"/>
    <property type="project" value="InterPro"/>
</dbReference>
<dbReference type="GO" id="GO:0050136">
    <property type="term" value="F:NADH:ubiquinone reductase (non-electrogenic) activity"/>
    <property type="evidence" value="ECO:0007669"/>
    <property type="project" value="UniProtKB-UniRule"/>
</dbReference>
<dbReference type="GO" id="GO:0048038">
    <property type="term" value="F:quinone binding"/>
    <property type="evidence" value="ECO:0007669"/>
    <property type="project" value="UniProtKB-KW"/>
</dbReference>
<dbReference type="GO" id="GO:0042773">
    <property type="term" value="P:ATP synthesis coupled electron transport"/>
    <property type="evidence" value="ECO:0007669"/>
    <property type="project" value="InterPro"/>
</dbReference>
<dbReference type="HAMAP" id="MF_00445">
    <property type="entry name" value="NDH1_NuoN_1"/>
    <property type="match status" value="1"/>
</dbReference>
<dbReference type="InterPro" id="IPR010096">
    <property type="entry name" value="NADH-Q_OxRdtase_suN/2"/>
</dbReference>
<dbReference type="InterPro" id="IPR001750">
    <property type="entry name" value="ND/Mrp_TM"/>
</dbReference>
<dbReference type="NCBIfam" id="TIGR01770">
    <property type="entry name" value="NDH_I_N"/>
    <property type="match status" value="1"/>
</dbReference>
<dbReference type="NCBIfam" id="NF004441">
    <property type="entry name" value="PRK05777.1-4"/>
    <property type="match status" value="1"/>
</dbReference>
<dbReference type="PANTHER" id="PTHR22773">
    <property type="entry name" value="NADH DEHYDROGENASE"/>
    <property type="match status" value="1"/>
</dbReference>
<dbReference type="Pfam" id="PF00361">
    <property type="entry name" value="Proton_antipo_M"/>
    <property type="match status" value="1"/>
</dbReference>
<sequence>MILPAPHVEYFLLAPMLIVFSVAVAGVLAEAFLPRRWRYGAQVTLALGGSAVALIAVIVVARSIHGSGHAAVLGAIAVDRATLFLQGTVLLVTIMAVVFMAERSARVSPQRQNTLAVARLPGLDSFTPQASAVPGSDAERQAERAGATQTELFPLAMLSVGGMMVFPASNDLLTMFVALEVLSLPLYLMCGLARNRRLLSQEAAMKYFLLGAFSSAFFLYGVALLYGATGTLTLPGIRDALAARTDDSMALAGVALLAVGLLFKVGAVPFHSWIPDVYQGAPTPITGFMAAATKVAAFGALLRVVYVALPPLHDQWRPVLWAIAILTMTVGTVTAVNQTNVKRMLAYSSVAHVGFILTGVIADNPAGLSATLFYLVAYSFSTMGAFAIVGLVRGADGSAGSEDADLSHWAGLGQRSPIVGVMLSMFLLAFAGIPLTSGFVSKFAVFRAAASAGAVPLVIVGVISSGVAAYFYVRVIVSMFFTEESGDTPHVAAPGVLSKAAIAVCTVVTVVLGIAPQPVLDLADQAAQLLR</sequence>
<keyword id="KW-1003">Cell membrane</keyword>
<keyword id="KW-0472">Membrane</keyword>
<keyword id="KW-0520">NAD</keyword>
<keyword id="KW-0874">Quinone</keyword>
<keyword id="KW-1185">Reference proteome</keyword>
<keyword id="KW-1278">Translocase</keyword>
<keyword id="KW-0812">Transmembrane</keyword>
<keyword id="KW-1133">Transmembrane helix</keyword>
<keyword id="KW-0813">Transport</keyword>
<feature type="chain" id="PRO_0000117694" description="NADH-quinone oxidoreductase subunit N">
    <location>
        <begin position="1"/>
        <end position="531"/>
    </location>
</feature>
<feature type="transmembrane region" description="Helical" evidence="1">
    <location>
        <begin position="8"/>
        <end position="28"/>
    </location>
</feature>
<feature type="transmembrane region" description="Helical" evidence="1">
    <location>
        <begin position="41"/>
        <end position="61"/>
    </location>
</feature>
<feature type="transmembrane region" description="Helical" evidence="1">
    <location>
        <begin position="81"/>
        <end position="101"/>
    </location>
</feature>
<feature type="transmembrane region" description="Helical" evidence="1">
    <location>
        <begin position="146"/>
        <end position="166"/>
    </location>
</feature>
<feature type="transmembrane region" description="Helical" evidence="1">
    <location>
        <begin position="172"/>
        <end position="192"/>
    </location>
</feature>
<feature type="transmembrane region" description="Helical" evidence="1">
    <location>
        <begin position="208"/>
        <end position="228"/>
    </location>
</feature>
<feature type="transmembrane region" description="Helical" evidence="1">
    <location>
        <begin position="250"/>
        <end position="270"/>
    </location>
</feature>
<feature type="transmembrane region" description="Helical" evidence="1">
    <location>
        <begin position="282"/>
        <end position="302"/>
    </location>
</feature>
<feature type="transmembrane region" description="Helical" evidence="1">
    <location>
        <begin position="318"/>
        <end position="338"/>
    </location>
</feature>
<feature type="transmembrane region" description="Helical" evidence="1">
    <location>
        <begin position="350"/>
        <end position="370"/>
    </location>
</feature>
<feature type="transmembrane region" description="Helical" evidence="1">
    <location>
        <begin position="372"/>
        <end position="392"/>
    </location>
</feature>
<feature type="transmembrane region" description="Helical" evidence="1">
    <location>
        <begin position="418"/>
        <end position="438"/>
    </location>
</feature>
<feature type="transmembrane region" description="Helical" evidence="1">
    <location>
        <begin position="453"/>
        <end position="473"/>
    </location>
</feature>
<feature type="transmembrane region" description="Helical" evidence="1">
    <location>
        <begin position="500"/>
        <end position="520"/>
    </location>
</feature>
<organism>
    <name type="scientific">Mycobacterium bovis (strain ATCC BAA-935 / AF2122/97)</name>
    <dbReference type="NCBI Taxonomy" id="233413"/>
    <lineage>
        <taxon>Bacteria</taxon>
        <taxon>Bacillati</taxon>
        <taxon>Actinomycetota</taxon>
        <taxon>Actinomycetes</taxon>
        <taxon>Mycobacteriales</taxon>
        <taxon>Mycobacteriaceae</taxon>
        <taxon>Mycobacterium</taxon>
        <taxon>Mycobacterium tuberculosis complex</taxon>
    </lineage>
</organism>
<reference key="1">
    <citation type="journal article" date="2003" name="Proc. Natl. Acad. Sci. U.S.A.">
        <title>The complete genome sequence of Mycobacterium bovis.</title>
        <authorList>
            <person name="Garnier T."/>
            <person name="Eiglmeier K."/>
            <person name="Camus J.-C."/>
            <person name="Medina N."/>
            <person name="Mansoor H."/>
            <person name="Pryor M."/>
            <person name="Duthoy S."/>
            <person name="Grondin S."/>
            <person name="Lacroix C."/>
            <person name="Monsempe C."/>
            <person name="Simon S."/>
            <person name="Harris B."/>
            <person name="Atkin R."/>
            <person name="Doggett J."/>
            <person name="Mayes R."/>
            <person name="Keating L."/>
            <person name="Wheeler P.R."/>
            <person name="Parkhill J."/>
            <person name="Barrell B.G."/>
            <person name="Cole S.T."/>
            <person name="Gordon S.V."/>
            <person name="Hewinson R.G."/>
        </authorList>
    </citation>
    <scope>NUCLEOTIDE SEQUENCE [LARGE SCALE GENOMIC DNA]</scope>
    <source>
        <strain>ATCC BAA-935 / AF2122/97</strain>
    </source>
</reference>
<reference key="2">
    <citation type="journal article" date="2017" name="Genome Announc.">
        <title>Updated reference genome sequence and annotation of Mycobacterium bovis AF2122/97.</title>
        <authorList>
            <person name="Malone K.M."/>
            <person name="Farrell D."/>
            <person name="Stuber T.P."/>
            <person name="Schubert O.T."/>
            <person name="Aebersold R."/>
            <person name="Robbe-Austerman S."/>
            <person name="Gordon S.V."/>
        </authorList>
    </citation>
    <scope>NUCLEOTIDE SEQUENCE [LARGE SCALE GENOMIC DNA]</scope>
    <scope>GENOME REANNOTATION</scope>
    <source>
        <strain>ATCC BAA-935 / AF2122/97</strain>
    </source>
</reference>
<name>NUON_MYCBO</name>
<accession>P0A5M1</accession>
<accession>A0A1R3Y391</accession>
<accession>O53308</accession>
<accession>X2BMS3</accession>
<gene>
    <name evidence="1" type="primary">nuoN</name>
    <name type="ordered locus">BQ2027_MB3182</name>
</gene>
<protein>
    <recommendedName>
        <fullName evidence="1">NADH-quinone oxidoreductase subunit N</fullName>
        <ecNumber evidence="1">7.1.1.-</ecNumber>
    </recommendedName>
    <alternativeName>
        <fullName evidence="1">NADH dehydrogenase I subunit N</fullName>
    </alternativeName>
    <alternativeName>
        <fullName evidence="1">NDH-1 subunit N</fullName>
    </alternativeName>
</protein>
<proteinExistence type="inferred from homology"/>
<comment type="function">
    <text evidence="1">NDH-1 shuttles electrons from NADH, via FMN and iron-sulfur (Fe-S) centers, to quinones in the respiratory chain. The immediate electron acceptor for the enzyme in this species is believed to be a menaquinone. Couples the redox reaction to proton translocation (for every two electrons transferred, four hydrogen ions are translocated across the cytoplasmic membrane), and thus conserves the redox energy in a proton gradient.</text>
</comment>
<comment type="catalytic activity">
    <reaction evidence="1">
        <text>a quinone + NADH + 5 H(+)(in) = a quinol + NAD(+) + 4 H(+)(out)</text>
        <dbReference type="Rhea" id="RHEA:57888"/>
        <dbReference type="ChEBI" id="CHEBI:15378"/>
        <dbReference type="ChEBI" id="CHEBI:24646"/>
        <dbReference type="ChEBI" id="CHEBI:57540"/>
        <dbReference type="ChEBI" id="CHEBI:57945"/>
        <dbReference type="ChEBI" id="CHEBI:132124"/>
    </reaction>
</comment>
<comment type="subunit">
    <text evidence="1">NDH-1 is composed of 14 different subunits. Subunits NuoA, H, J, K, L, M, N constitute the membrane sector of the complex.</text>
</comment>
<comment type="subcellular location">
    <subcellularLocation>
        <location evidence="1">Cell membrane</location>
        <topology evidence="1">Multi-pass membrane protein</topology>
    </subcellularLocation>
</comment>
<comment type="similarity">
    <text evidence="1">Belongs to the complex I subunit 2 family.</text>
</comment>